<reference key="1">
    <citation type="journal article" date="2003" name="Lancet">
        <title>Sequencing and analysis of the genome of the Whipple's disease bacterium Tropheryma whipplei.</title>
        <authorList>
            <person name="Bentley S.D."/>
            <person name="Maiwald M."/>
            <person name="Murphy L.D."/>
            <person name="Pallen M.J."/>
            <person name="Yeats C.A."/>
            <person name="Dover L.G."/>
            <person name="Norbertczak H.T."/>
            <person name="Besra G.S."/>
            <person name="Quail M.A."/>
            <person name="Harris D.E."/>
            <person name="von Herbay A."/>
            <person name="Goble A."/>
            <person name="Rutter S."/>
            <person name="Squares R."/>
            <person name="Squares S."/>
            <person name="Barrell B.G."/>
            <person name="Parkhill J."/>
            <person name="Relman D.A."/>
        </authorList>
    </citation>
    <scope>NUCLEOTIDE SEQUENCE [LARGE SCALE GENOMIC DNA]</scope>
    <source>
        <strain>TW08/27</strain>
    </source>
</reference>
<comment type="function">
    <text evidence="1">Catalyzes the reversible reaction in which hydroxymethyl group from 5,10-methylenetetrahydrofolate is transferred onto alpha-ketoisovalerate to form ketopantoate.</text>
</comment>
<comment type="catalytic activity">
    <reaction evidence="1">
        <text>3-methyl-2-oxobutanoate + (6R)-5,10-methylene-5,6,7,8-tetrahydrofolate + H2O = 2-dehydropantoate + (6S)-5,6,7,8-tetrahydrofolate</text>
        <dbReference type="Rhea" id="RHEA:11824"/>
        <dbReference type="ChEBI" id="CHEBI:11561"/>
        <dbReference type="ChEBI" id="CHEBI:11851"/>
        <dbReference type="ChEBI" id="CHEBI:15377"/>
        <dbReference type="ChEBI" id="CHEBI:15636"/>
        <dbReference type="ChEBI" id="CHEBI:57453"/>
        <dbReference type="EC" id="2.1.2.11"/>
    </reaction>
</comment>
<comment type="cofactor">
    <cofactor evidence="1">
        <name>Mg(2+)</name>
        <dbReference type="ChEBI" id="CHEBI:18420"/>
    </cofactor>
    <text evidence="1">Binds 1 Mg(2+) ion per subunit.</text>
</comment>
<comment type="pathway">
    <text evidence="1">Cofactor biosynthesis; (R)-pantothenate biosynthesis; (R)-pantoate from 3-methyl-2-oxobutanoate: step 1/2.</text>
</comment>
<comment type="subunit">
    <text evidence="1">Homodecamer; pentamer of dimers.</text>
</comment>
<comment type="subcellular location">
    <subcellularLocation>
        <location evidence="1">Cytoplasm</location>
    </subcellularLocation>
</comment>
<comment type="similarity">
    <text evidence="1">Belongs to the PanB family.</text>
</comment>
<name>PANB_TROW8</name>
<dbReference type="EC" id="2.1.2.11" evidence="1"/>
<dbReference type="EMBL" id="BX251411">
    <property type="protein sequence ID" value="CAD67177.1"/>
    <property type="molecule type" value="Genomic_DNA"/>
</dbReference>
<dbReference type="RefSeq" id="WP_011096457.1">
    <property type="nucleotide sequence ID" value="NC_004551.1"/>
</dbReference>
<dbReference type="SMR" id="Q83HM1"/>
<dbReference type="GeneID" id="67388289"/>
<dbReference type="KEGG" id="tws:TW510"/>
<dbReference type="HOGENOM" id="CLU_036645_1_0_11"/>
<dbReference type="UniPathway" id="UPA00028">
    <property type="reaction ID" value="UER00003"/>
</dbReference>
<dbReference type="GO" id="GO:0005737">
    <property type="term" value="C:cytoplasm"/>
    <property type="evidence" value="ECO:0007669"/>
    <property type="project" value="UniProtKB-SubCell"/>
</dbReference>
<dbReference type="GO" id="GO:0003864">
    <property type="term" value="F:3-methyl-2-oxobutanoate hydroxymethyltransferase activity"/>
    <property type="evidence" value="ECO:0007669"/>
    <property type="project" value="UniProtKB-UniRule"/>
</dbReference>
<dbReference type="GO" id="GO:0000287">
    <property type="term" value="F:magnesium ion binding"/>
    <property type="evidence" value="ECO:0007669"/>
    <property type="project" value="TreeGrafter"/>
</dbReference>
<dbReference type="GO" id="GO:0015940">
    <property type="term" value="P:pantothenate biosynthetic process"/>
    <property type="evidence" value="ECO:0007669"/>
    <property type="project" value="UniProtKB-UniRule"/>
</dbReference>
<dbReference type="CDD" id="cd06557">
    <property type="entry name" value="KPHMT-like"/>
    <property type="match status" value="1"/>
</dbReference>
<dbReference type="FunFam" id="3.20.20.60:FF:000003">
    <property type="entry name" value="3-methyl-2-oxobutanoate hydroxymethyltransferase"/>
    <property type="match status" value="1"/>
</dbReference>
<dbReference type="Gene3D" id="3.20.20.60">
    <property type="entry name" value="Phosphoenolpyruvate-binding domains"/>
    <property type="match status" value="1"/>
</dbReference>
<dbReference type="HAMAP" id="MF_00156">
    <property type="entry name" value="PanB"/>
    <property type="match status" value="1"/>
</dbReference>
<dbReference type="InterPro" id="IPR003700">
    <property type="entry name" value="Pantoate_hydroxy_MeTrfase"/>
</dbReference>
<dbReference type="InterPro" id="IPR015813">
    <property type="entry name" value="Pyrv/PenolPyrv_kinase-like_dom"/>
</dbReference>
<dbReference type="InterPro" id="IPR040442">
    <property type="entry name" value="Pyrv_kinase-like_dom_sf"/>
</dbReference>
<dbReference type="NCBIfam" id="TIGR00222">
    <property type="entry name" value="panB"/>
    <property type="match status" value="1"/>
</dbReference>
<dbReference type="NCBIfam" id="NF001452">
    <property type="entry name" value="PRK00311.1"/>
    <property type="match status" value="1"/>
</dbReference>
<dbReference type="PANTHER" id="PTHR20881">
    <property type="entry name" value="3-METHYL-2-OXOBUTANOATE HYDROXYMETHYLTRANSFERASE"/>
    <property type="match status" value="1"/>
</dbReference>
<dbReference type="PANTHER" id="PTHR20881:SF0">
    <property type="entry name" value="3-METHYL-2-OXOBUTANOATE HYDROXYMETHYLTRANSFERASE"/>
    <property type="match status" value="1"/>
</dbReference>
<dbReference type="Pfam" id="PF02548">
    <property type="entry name" value="Pantoate_transf"/>
    <property type="match status" value="1"/>
</dbReference>
<dbReference type="PIRSF" id="PIRSF000388">
    <property type="entry name" value="Pantoate_hydroxy_MeTrfase"/>
    <property type="match status" value="1"/>
</dbReference>
<dbReference type="SUPFAM" id="SSF51621">
    <property type="entry name" value="Phosphoenolpyruvate/pyruvate domain"/>
    <property type="match status" value="1"/>
</dbReference>
<organism>
    <name type="scientific">Tropheryma whipplei (strain TW08/27)</name>
    <name type="common">Whipple's bacillus</name>
    <dbReference type="NCBI Taxonomy" id="218496"/>
    <lineage>
        <taxon>Bacteria</taxon>
        <taxon>Bacillati</taxon>
        <taxon>Actinomycetota</taxon>
        <taxon>Actinomycetes</taxon>
        <taxon>Micrococcales</taxon>
        <taxon>Tropherymataceae</taxon>
        <taxon>Tropheryma</taxon>
    </lineage>
</organism>
<keyword id="KW-0963">Cytoplasm</keyword>
<keyword id="KW-0460">Magnesium</keyword>
<keyword id="KW-0479">Metal-binding</keyword>
<keyword id="KW-0566">Pantothenate biosynthesis</keyword>
<keyword id="KW-0808">Transferase</keyword>
<sequence>MSRKPSPTRRTRIHRFHKGSCGRKLVGLTCYDFSTARVLSDCELDFLLVGDSASGVIYGYENTGSVCLDEIIYLAAGVVRGAPNSFIIVDLPFGTYEKSDELAVETAIEVIKRTGASAVKLEGGARMACRISAIVRAGVPVMGHIGFTPQTINALGGYKIQGRDNADLIYLDAQAVEQAGAFAVVMEMVTEDLAKTITSEIKIATIGVGAGRYTDGQLLVINDLIGLSEKKITFAPRYASIDNTVASCVKLWRKDVLEGNFPQKDHIPA</sequence>
<accession>Q83HM1</accession>
<evidence type="ECO:0000255" key="1">
    <source>
        <dbReference type="HAMAP-Rule" id="MF_00156"/>
    </source>
</evidence>
<feature type="chain" id="PRO_0000297404" description="3-methyl-2-oxobutanoate hydroxymethyltransferase">
    <location>
        <begin position="1"/>
        <end position="269"/>
    </location>
</feature>
<feature type="active site" description="Proton acceptor" evidence="1">
    <location>
        <position position="187"/>
    </location>
</feature>
<feature type="binding site" evidence="1">
    <location>
        <begin position="51"/>
        <end position="52"/>
    </location>
    <ligand>
        <name>3-methyl-2-oxobutanoate</name>
        <dbReference type="ChEBI" id="CHEBI:11851"/>
    </ligand>
</feature>
<feature type="binding site" evidence="1">
    <location>
        <position position="51"/>
    </location>
    <ligand>
        <name>Mg(2+)</name>
        <dbReference type="ChEBI" id="CHEBI:18420"/>
    </ligand>
</feature>
<feature type="binding site" evidence="1">
    <location>
        <position position="90"/>
    </location>
    <ligand>
        <name>3-methyl-2-oxobutanoate</name>
        <dbReference type="ChEBI" id="CHEBI:11851"/>
    </ligand>
</feature>
<feature type="binding site" evidence="1">
    <location>
        <position position="90"/>
    </location>
    <ligand>
        <name>Mg(2+)</name>
        <dbReference type="ChEBI" id="CHEBI:18420"/>
    </ligand>
</feature>
<feature type="binding site" evidence="1">
    <location>
        <position position="120"/>
    </location>
    <ligand>
        <name>3-methyl-2-oxobutanoate</name>
        <dbReference type="ChEBI" id="CHEBI:11851"/>
    </ligand>
</feature>
<feature type="binding site" evidence="1">
    <location>
        <position position="122"/>
    </location>
    <ligand>
        <name>Mg(2+)</name>
        <dbReference type="ChEBI" id="CHEBI:18420"/>
    </ligand>
</feature>
<proteinExistence type="inferred from homology"/>
<gene>
    <name evidence="1" type="primary">panB</name>
    <name type="ordered locus">TW510</name>
</gene>
<protein>
    <recommendedName>
        <fullName evidence="1">3-methyl-2-oxobutanoate hydroxymethyltransferase</fullName>
        <ecNumber evidence="1">2.1.2.11</ecNumber>
    </recommendedName>
    <alternativeName>
        <fullName evidence="1">Ketopantoate hydroxymethyltransferase</fullName>
        <shortName evidence="1">KPHMT</shortName>
    </alternativeName>
</protein>